<keyword id="KW-0175">Coiled coil</keyword>
<keyword id="KW-0539">Nucleus</keyword>
<keyword id="KW-0597">Phosphoprotein</keyword>
<keyword id="KW-1185">Reference proteome</keyword>
<keyword id="KW-0690">Ribosome biogenesis</keyword>
<keyword id="KW-0698">rRNA processing</keyword>
<gene>
    <name type="ORF">GI18209</name>
</gene>
<accession>B4KID9</accession>
<sequence length="631" mass="74288">MRRPKKYEAGEATQYISRRAALRKLQLSLNDFRRLCILKGVYPREPKHRRRAQKGSSEIKILYHTKDIRFLLHEPIVWTLRDYKIFAKKSGRDRAIKDFRNLKRRLALFPEIKLDHIVKERYPTFIDALKDLDDCLTLLFLFSTFPSLHLIPREQSNLCRRLTIEFLHYVIASKSLRKVFISIKGYYFQAEIKGQKVTWIVPHYYPFKPQSRQEVDFKVMSIFVEFYTIMLGFTNYRLYHGLNLAYPPQFPSSMLQDNEETLKDETSFVSERIAALNFELLRTDKVQEDEEEPDIDMELLEQDGDSKRIIKMKQEAQEIARLRNLFKGLKFFINREVPREPLVIIIRSFGGKVSWDSSVFSGSTYDESDETITHQIVDRPSLSTQYISRDYIQPQWVFDCVNQRQLLPTNKYFLGEELPPHLSPFVDAKRDTYVPPEEKALHDPSLIETHAQSDDESDEEEAAQNEDDTVDQELLDAQLQRAYQQETAEYKKYGGPDGVNEDEEDTDDDFDGEQESDEEEEELDEKTKRLQEEKKKMSVQSGKVHKVNKRQLHKAEVDEHRLQARMVKPRHRNLFRKLIREKQSKEKEEWLLRKKRRNIDNDTKEAKKLVKREAKKAAAAAAAAASQLGVK</sequence>
<organism>
    <name type="scientific">Drosophila mojavensis</name>
    <name type="common">Fruit fly</name>
    <dbReference type="NCBI Taxonomy" id="7230"/>
    <lineage>
        <taxon>Eukaryota</taxon>
        <taxon>Metazoa</taxon>
        <taxon>Ecdysozoa</taxon>
        <taxon>Arthropoda</taxon>
        <taxon>Hexapoda</taxon>
        <taxon>Insecta</taxon>
        <taxon>Pterygota</taxon>
        <taxon>Neoptera</taxon>
        <taxon>Endopterygota</taxon>
        <taxon>Diptera</taxon>
        <taxon>Brachycera</taxon>
        <taxon>Muscomorpha</taxon>
        <taxon>Ephydroidea</taxon>
        <taxon>Drosophilidae</taxon>
        <taxon>Drosophila</taxon>
    </lineage>
</organism>
<evidence type="ECO:0000250" key="1"/>
<evidence type="ECO:0000255" key="2">
    <source>
        <dbReference type="HAMAP-Rule" id="MF_03028"/>
    </source>
</evidence>
<evidence type="ECO:0000256" key="3">
    <source>
        <dbReference type="SAM" id="MobiDB-lite"/>
    </source>
</evidence>
<proteinExistence type="inferred from homology"/>
<dbReference type="EMBL" id="CH933807">
    <property type="protein sequence ID" value="EDW13436.1"/>
    <property type="molecule type" value="Genomic_DNA"/>
</dbReference>
<dbReference type="SMR" id="B4KID9"/>
<dbReference type="FunCoup" id="B4KID9">
    <property type="interactions" value="2275"/>
</dbReference>
<dbReference type="EnsemblMetazoa" id="FBtr0168934">
    <property type="protein sequence ID" value="FBpp0167426"/>
    <property type="gene ID" value="FBgn0140948"/>
</dbReference>
<dbReference type="EnsemblMetazoa" id="XM_002003958.4">
    <property type="protein sequence ID" value="XP_002003994.1"/>
    <property type="gene ID" value="LOC6578072"/>
</dbReference>
<dbReference type="GeneID" id="6578072"/>
<dbReference type="KEGG" id="dmo:Dmoj_GI18209"/>
<dbReference type="eggNOG" id="KOG2481">
    <property type="taxonomic scope" value="Eukaryota"/>
</dbReference>
<dbReference type="HOGENOM" id="CLU_019619_0_0_1"/>
<dbReference type="InParanoid" id="B4KID9"/>
<dbReference type="OMA" id="QKVTWIV"/>
<dbReference type="OrthoDB" id="10264910at2759"/>
<dbReference type="PhylomeDB" id="B4KID9"/>
<dbReference type="Proteomes" id="UP000009192">
    <property type="component" value="Unassembled WGS sequence"/>
</dbReference>
<dbReference type="GO" id="GO:0005730">
    <property type="term" value="C:nucleolus"/>
    <property type="evidence" value="ECO:0000250"/>
    <property type="project" value="UniProtKB"/>
</dbReference>
<dbReference type="GO" id="GO:0005654">
    <property type="term" value="C:nucleoplasm"/>
    <property type="evidence" value="ECO:0000250"/>
    <property type="project" value="UniProtKB"/>
</dbReference>
<dbReference type="GO" id="GO:0070545">
    <property type="term" value="C:PeBoW complex"/>
    <property type="evidence" value="ECO:0007669"/>
    <property type="project" value="TreeGrafter"/>
</dbReference>
<dbReference type="GO" id="GO:0030687">
    <property type="term" value="C:preribosome, large subunit precursor"/>
    <property type="evidence" value="ECO:0007669"/>
    <property type="project" value="UniProtKB-UniRule"/>
</dbReference>
<dbReference type="GO" id="GO:0043021">
    <property type="term" value="F:ribonucleoprotein complex binding"/>
    <property type="evidence" value="ECO:0007669"/>
    <property type="project" value="UniProtKB-UniRule"/>
</dbReference>
<dbReference type="GO" id="GO:0003723">
    <property type="term" value="F:RNA binding"/>
    <property type="evidence" value="ECO:0007669"/>
    <property type="project" value="TreeGrafter"/>
</dbReference>
<dbReference type="GO" id="GO:0000466">
    <property type="term" value="P:maturation of 5.8S rRNA from tricistronic rRNA transcript (SSU-rRNA, 5.8S rRNA, LSU-rRNA)"/>
    <property type="evidence" value="ECO:0007669"/>
    <property type="project" value="UniProtKB-UniRule"/>
</dbReference>
<dbReference type="GO" id="GO:0000463">
    <property type="term" value="P:maturation of LSU-rRNA from tricistronic rRNA transcript (SSU-rRNA, 5.8S rRNA, LSU-rRNA)"/>
    <property type="evidence" value="ECO:0000250"/>
    <property type="project" value="UniProtKB"/>
</dbReference>
<dbReference type="CDD" id="cd17709">
    <property type="entry name" value="BRCT_pescadillo_like"/>
    <property type="match status" value="1"/>
</dbReference>
<dbReference type="FunFam" id="3.40.50.10190:FF:000002">
    <property type="entry name" value="Pescadillo homolog"/>
    <property type="match status" value="1"/>
</dbReference>
<dbReference type="Gene3D" id="3.40.50.10190">
    <property type="entry name" value="BRCT domain"/>
    <property type="match status" value="1"/>
</dbReference>
<dbReference type="HAMAP" id="MF_03028">
    <property type="entry name" value="Pescadillo"/>
    <property type="match status" value="1"/>
</dbReference>
<dbReference type="InterPro" id="IPR001357">
    <property type="entry name" value="BRCT_dom"/>
</dbReference>
<dbReference type="InterPro" id="IPR036420">
    <property type="entry name" value="BRCT_dom_sf"/>
</dbReference>
<dbReference type="InterPro" id="IPR010613">
    <property type="entry name" value="PES"/>
</dbReference>
<dbReference type="PANTHER" id="PTHR12221">
    <property type="entry name" value="PESCADILLO - RELATED"/>
    <property type="match status" value="1"/>
</dbReference>
<dbReference type="PANTHER" id="PTHR12221:SF6">
    <property type="entry name" value="PESCADILLO HOMOLOG"/>
    <property type="match status" value="1"/>
</dbReference>
<dbReference type="Pfam" id="PF16589">
    <property type="entry name" value="BRCT_2"/>
    <property type="match status" value="1"/>
</dbReference>
<dbReference type="Pfam" id="PF06732">
    <property type="entry name" value="Pescadillo_N"/>
    <property type="match status" value="1"/>
</dbReference>
<dbReference type="SMART" id="SM00292">
    <property type="entry name" value="BRCT"/>
    <property type="match status" value="1"/>
</dbReference>
<dbReference type="SUPFAM" id="SSF52113">
    <property type="entry name" value="BRCT domain"/>
    <property type="match status" value="1"/>
</dbReference>
<dbReference type="PROSITE" id="PS50172">
    <property type="entry name" value="BRCT"/>
    <property type="match status" value="1"/>
</dbReference>
<comment type="function">
    <text evidence="2">Required for maturation of ribosomal RNAs and formation of the large ribosomal subunit.</text>
</comment>
<comment type="subcellular location">
    <subcellularLocation>
        <location evidence="2">Nucleus</location>
        <location evidence="2">Nucleolus</location>
    </subcellularLocation>
    <subcellularLocation>
        <location evidence="2">Nucleus</location>
        <location evidence="2">Nucleoplasm</location>
    </subcellularLocation>
</comment>
<comment type="similarity">
    <text evidence="2">Belongs to the pescadillo family.</text>
</comment>
<reference key="1">
    <citation type="journal article" date="2007" name="Nature">
        <title>Evolution of genes and genomes on the Drosophila phylogeny.</title>
        <authorList>
            <consortium name="Drosophila 12 genomes consortium"/>
        </authorList>
    </citation>
    <scope>NUCLEOTIDE SEQUENCE [LARGE SCALE GENOMIC DNA]</scope>
    <source>
        <strain>Tucson 15081-1352.22</strain>
    </source>
</reference>
<feature type="chain" id="PRO_0000370456" description="Pescadillo homolog">
    <location>
        <begin position="1"/>
        <end position="631"/>
    </location>
</feature>
<feature type="domain" description="BRCT" evidence="2">
    <location>
        <begin position="321"/>
        <end position="414"/>
    </location>
</feature>
<feature type="region of interest" description="Disordered" evidence="3">
    <location>
        <begin position="450"/>
        <end position="469"/>
    </location>
</feature>
<feature type="region of interest" description="Disordered" evidence="3">
    <location>
        <begin position="489"/>
        <end position="569"/>
    </location>
</feature>
<feature type="coiled-coil region" evidence="2">
    <location>
        <begin position="510"/>
        <end position="541"/>
    </location>
</feature>
<feature type="compositionally biased region" description="Acidic residues" evidence="3">
    <location>
        <begin position="454"/>
        <end position="469"/>
    </location>
</feature>
<feature type="compositionally biased region" description="Acidic residues" evidence="3">
    <location>
        <begin position="499"/>
        <end position="524"/>
    </location>
</feature>
<feature type="compositionally biased region" description="Basic and acidic residues" evidence="3">
    <location>
        <begin position="525"/>
        <end position="536"/>
    </location>
</feature>
<feature type="compositionally biased region" description="Basic residues" evidence="3">
    <location>
        <begin position="543"/>
        <end position="552"/>
    </location>
</feature>
<feature type="compositionally biased region" description="Basic and acidic residues" evidence="3">
    <location>
        <begin position="553"/>
        <end position="562"/>
    </location>
</feature>
<feature type="modified residue" description="Phosphoserine" evidence="1">
    <location>
        <position position="453"/>
    </location>
</feature>
<feature type="modified residue" description="Phosphoserine" evidence="1">
    <location>
        <position position="457"/>
    </location>
</feature>
<protein>
    <recommendedName>
        <fullName evidence="2">Pescadillo homolog</fullName>
    </recommendedName>
</protein>
<name>PESC_DROMO</name>